<keyword id="KW-0046">Antibiotic resistance</keyword>
<keyword id="KW-0997">Cell inner membrane</keyword>
<keyword id="KW-1003">Cell membrane</keyword>
<keyword id="KW-0328">Glycosyltransferase</keyword>
<keyword id="KW-0441">Lipid A biosynthesis</keyword>
<keyword id="KW-0444">Lipid biosynthesis</keyword>
<keyword id="KW-0443">Lipid metabolism</keyword>
<keyword id="KW-0448">Lipopolysaccharide biosynthesis</keyword>
<keyword id="KW-0472">Membrane</keyword>
<keyword id="KW-0808">Transferase</keyword>
<keyword id="KW-0812">Transmembrane</keyword>
<keyword id="KW-1133">Transmembrane helix</keyword>
<reference key="1">
    <citation type="journal article" date="2006" name="BMC Genomics">
        <title>Complete genome sequence of Shigella flexneri 5b and comparison with Shigella flexneri 2a.</title>
        <authorList>
            <person name="Nie H."/>
            <person name="Yang F."/>
            <person name="Zhang X."/>
            <person name="Yang J."/>
            <person name="Chen L."/>
            <person name="Wang J."/>
            <person name="Xiong Z."/>
            <person name="Peng J."/>
            <person name="Sun L."/>
            <person name="Dong J."/>
            <person name="Xue Y."/>
            <person name="Xu X."/>
            <person name="Chen S."/>
            <person name="Yao Z."/>
            <person name="Shen Y."/>
            <person name="Jin Q."/>
        </authorList>
    </citation>
    <scope>NUCLEOTIDE SEQUENCE [LARGE SCALE GENOMIC DNA]</scope>
    <source>
        <strain>8401</strain>
    </source>
</reference>
<organism>
    <name type="scientific">Shigella flexneri serotype 5b (strain 8401)</name>
    <dbReference type="NCBI Taxonomy" id="373384"/>
    <lineage>
        <taxon>Bacteria</taxon>
        <taxon>Pseudomonadati</taxon>
        <taxon>Pseudomonadota</taxon>
        <taxon>Gammaproteobacteria</taxon>
        <taxon>Enterobacterales</taxon>
        <taxon>Enterobacteriaceae</taxon>
        <taxon>Shigella</taxon>
    </lineage>
</organism>
<accession>Q0T2M9</accession>
<name>ARNC_SHIF8</name>
<protein>
    <recommendedName>
        <fullName evidence="1">Undecaprenyl-phosphate 4-deoxy-4-formamido-L-arabinose transferase</fullName>
        <ecNumber evidence="1">2.4.2.53</ecNumber>
    </recommendedName>
    <alternativeName>
        <fullName evidence="1">Undecaprenyl-phosphate Ara4FN transferase</fullName>
        <shortName evidence="1">Ara4FN transferase</shortName>
    </alternativeName>
</protein>
<comment type="function">
    <text evidence="1">Catalyzes the transfer of 4-deoxy-4-formamido-L-arabinose from UDP to undecaprenyl phosphate. The modified arabinose is attached to lipid A and is required for resistance to polymyxin and cationic antimicrobial peptides.</text>
</comment>
<comment type="catalytic activity">
    <reaction evidence="1">
        <text>UDP-4-deoxy-4-formamido-beta-L-arabinose + di-trans,octa-cis-undecaprenyl phosphate = 4-deoxy-4-formamido-alpha-L-arabinopyranosyl di-trans,octa-cis-undecaprenyl phosphate + UDP</text>
        <dbReference type="Rhea" id="RHEA:27722"/>
        <dbReference type="ChEBI" id="CHEBI:58223"/>
        <dbReference type="ChEBI" id="CHEBI:58709"/>
        <dbReference type="ChEBI" id="CHEBI:58909"/>
        <dbReference type="ChEBI" id="CHEBI:60392"/>
        <dbReference type="EC" id="2.4.2.53"/>
    </reaction>
</comment>
<comment type="pathway">
    <text evidence="1">Glycolipid biosynthesis; 4-amino-4-deoxy-alpha-L-arabinose undecaprenyl phosphate biosynthesis; 4-amino-4-deoxy-alpha-L-arabinose undecaprenyl phosphate from UDP-4-deoxy-4-formamido-beta-L-arabinose and undecaprenyl phosphate: step 1/2.</text>
</comment>
<comment type="pathway">
    <text evidence="1">Bacterial outer membrane biogenesis; lipopolysaccharide biosynthesis.</text>
</comment>
<comment type="subcellular location">
    <subcellularLocation>
        <location evidence="1">Cell inner membrane</location>
        <topology evidence="1">Multi-pass membrane protein</topology>
    </subcellularLocation>
</comment>
<comment type="similarity">
    <text evidence="1">Belongs to the glycosyltransferase 2 family.</text>
</comment>
<sequence>MFEIHPVKKVSVVIPVYNEQESLPELIRRTTTACESLGKEYEILLIDDGSSDNSAHMLVEASQAENSHIVSILLNRNYGQHSAIMAGFSHVTGDLIITLDADLQNPPEEIPRLVAKADEGYDVVGTVRQNRQDSWFRKTASKMINRLIQRTTGKAMGNYGCMLRAYRRHIVDAMLHCHERSTFIPILANIFARRAIEIPVHHAEREFGESKYSFMRLINLMYDLVTCLTTTPLRMLSLLGSIIAIGGFSIAVLLVILRLTFGPQWAAEGVFMLFAVLFTFIGAQFIGMGLLGEYIGRIYTDVRARPRYFVQQVIRPSSKENE</sequence>
<evidence type="ECO:0000255" key="1">
    <source>
        <dbReference type="HAMAP-Rule" id="MF_01164"/>
    </source>
</evidence>
<feature type="chain" id="PRO_1000065658" description="Undecaprenyl-phosphate 4-deoxy-4-formamido-L-arabinose transferase">
    <location>
        <begin position="1"/>
        <end position="322"/>
    </location>
</feature>
<feature type="topological domain" description="Cytoplasmic" evidence="1">
    <location>
        <begin position="1"/>
        <end position="235"/>
    </location>
</feature>
<feature type="transmembrane region" description="Helical" evidence="1">
    <location>
        <begin position="236"/>
        <end position="256"/>
    </location>
</feature>
<feature type="topological domain" description="Periplasmic" evidence="1">
    <location>
        <begin position="257"/>
        <end position="269"/>
    </location>
</feature>
<feature type="transmembrane region" description="Helical" evidence="1">
    <location>
        <begin position="270"/>
        <end position="290"/>
    </location>
</feature>
<feature type="topological domain" description="Cytoplasmic" evidence="1">
    <location>
        <begin position="291"/>
        <end position="322"/>
    </location>
</feature>
<dbReference type="EC" id="2.4.2.53" evidence="1"/>
<dbReference type="EMBL" id="CP000266">
    <property type="protein sequence ID" value="ABF04436.1"/>
    <property type="molecule type" value="Genomic_DNA"/>
</dbReference>
<dbReference type="RefSeq" id="WP_000461664.1">
    <property type="nucleotide sequence ID" value="NC_008258.1"/>
</dbReference>
<dbReference type="SMR" id="Q0T2M9"/>
<dbReference type="CAZy" id="GT2">
    <property type="family name" value="Glycosyltransferase Family 2"/>
</dbReference>
<dbReference type="KEGG" id="sfv:SFV_2324"/>
<dbReference type="HOGENOM" id="CLU_033536_0_0_6"/>
<dbReference type="UniPathway" id="UPA00030"/>
<dbReference type="UniPathway" id="UPA00036">
    <property type="reaction ID" value="UER00495"/>
</dbReference>
<dbReference type="Proteomes" id="UP000000659">
    <property type="component" value="Chromosome"/>
</dbReference>
<dbReference type="GO" id="GO:0005886">
    <property type="term" value="C:plasma membrane"/>
    <property type="evidence" value="ECO:0007669"/>
    <property type="project" value="UniProtKB-SubCell"/>
</dbReference>
<dbReference type="GO" id="GO:0016780">
    <property type="term" value="F:phosphotransferase activity, for other substituted phosphate groups"/>
    <property type="evidence" value="ECO:0007669"/>
    <property type="project" value="UniProtKB-UniRule"/>
</dbReference>
<dbReference type="GO" id="GO:0099621">
    <property type="term" value="F:undecaprenyl-phosphate 4-deoxy-4-formamido-L-arabinose transferase activity"/>
    <property type="evidence" value="ECO:0007669"/>
    <property type="project" value="UniProtKB-EC"/>
</dbReference>
<dbReference type="GO" id="GO:0036108">
    <property type="term" value="P:4-amino-4-deoxy-alpha-L-arabinopyranosyl undecaprenyl phosphate biosynthetic process"/>
    <property type="evidence" value="ECO:0007669"/>
    <property type="project" value="UniProtKB-UniRule"/>
</dbReference>
<dbReference type="GO" id="GO:0009245">
    <property type="term" value="P:lipid A biosynthetic process"/>
    <property type="evidence" value="ECO:0007669"/>
    <property type="project" value="UniProtKB-UniRule"/>
</dbReference>
<dbReference type="GO" id="GO:0009103">
    <property type="term" value="P:lipopolysaccharide biosynthetic process"/>
    <property type="evidence" value="ECO:0007669"/>
    <property type="project" value="UniProtKB-UniRule"/>
</dbReference>
<dbReference type="GO" id="GO:0046677">
    <property type="term" value="P:response to antibiotic"/>
    <property type="evidence" value="ECO:0007669"/>
    <property type="project" value="UniProtKB-KW"/>
</dbReference>
<dbReference type="CDD" id="cd04187">
    <property type="entry name" value="DPM1_like_bac"/>
    <property type="match status" value="1"/>
</dbReference>
<dbReference type="FunFam" id="3.90.550.10:FF:000019">
    <property type="entry name" value="Undecaprenyl-phosphate 4-deoxy-4-formamido-L-arabinose transferase"/>
    <property type="match status" value="1"/>
</dbReference>
<dbReference type="Gene3D" id="3.90.550.10">
    <property type="entry name" value="Spore Coat Polysaccharide Biosynthesis Protein SpsA, Chain A"/>
    <property type="match status" value="1"/>
</dbReference>
<dbReference type="HAMAP" id="MF_01164">
    <property type="entry name" value="ArnC_transfer"/>
    <property type="match status" value="1"/>
</dbReference>
<dbReference type="InterPro" id="IPR022857">
    <property type="entry name" value="ArnC_tfrase"/>
</dbReference>
<dbReference type="InterPro" id="IPR001173">
    <property type="entry name" value="Glyco_trans_2-like"/>
</dbReference>
<dbReference type="InterPro" id="IPR050256">
    <property type="entry name" value="Glycosyltransferase_2"/>
</dbReference>
<dbReference type="InterPro" id="IPR029044">
    <property type="entry name" value="Nucleotide-diphossugar_trans"/>
</dbReference>
<dbReference type="NCBIfam" id="NF007986">
    <property type="entry name" value="PRK10714.1"/>
    <property type="match status" value="1"/>
</dbReference>
<dbReference type="PANTHER" id="PTHR48090:SF3">
    <property type="entry name" value="UNDECAPRENYL-PHOSPHATE 4-DEOXY-4-FORMAMIDO-L-ARABINOSE TRANSFERASE"/>
    <property type="match status" value="1"/>
</dbReference>
<dbReference type="PANTHER" id="PTHR48090">
    <property type="entry name" value="UNDECAPRENYL-PHOSPHATE 4-DEOXY-4-FORMAMIDO-L-ARABINOSE TRANSFERASE-RELATED"/>
    <property type="match status" value="1"/>
</dbReference>
<dbReference type="Pfam" id="PF00535">
    <property type="entry name" value="Glycos_transf_2"/>
    <property type="match status" value="1"/>
</dbReference>
<dbReference type="SUPFAM" id="SSF53448">
    <property type="entry name" value="Nucleotide-diphospho-sugar transferases"/>
    <property type="match status" value="1"/>
</dbReference>
<proteinExistence type="inferred from homology"/>
<gene>
    <name evidence="1" type="primary">arnC</name>
    <name type="ordered locus">SFV_2324</name>
</gene>